<comment type="function">
    <text evidence="1">Binds to the 23S rRNA.</text>
</comment>
<comment type="subunit">
    <text evidence="1">Part of the 50S ribosomal subunit.</text>
</comment>
<comment type="similarity">
    <text evidence="1">Belongs to the universal ribosomal protein uL15 family.</text>
</comment>
<name>RL15_PARP8</name>
<organism>
    <name type="scientific">Paraburkholderia phymatum (strain DSM 17167 / CIP 108236 / LMG 21445 / STM815)</name>
    <name type="common">Burkholderia phymatum</name>
    <dbReference type="NCBI Taxonomy" id="391038"/>
    <lineage>
        <taxon>Bacteria</taxon>
        <taxon>Pseudomonadati</taxon>
        <taxon>Pseudomonadota</taxon>
        <taxon>Betaproteobacteria</taxon>
        <taxon>Burkholderiales</taxon>
        <taxon>Burkholderiaceae</taxon>
        <taxon>Paraburkholderia</taxon>
    </lineage>
</organism>
<proteinExistence type="inferred from homology"/>
<gene>
    <name evidence="1" type="primary">rplO</name>
    <name type="ordered locus">Bphy_2820</name>
</gene>
<sequence>MELNNLKPAEGAKHAKRRVGRGIGSGLGKTAGRGHKGQKSRSGGFHKVGFEGGQMPLQRRLPKRGFTSLTKEFVGEVRLGDLEKLPVDDIDLLALKQAGLIGEMMTSAKIIATGELKRKIVVKGLSATKGARAAIEAAGGSFAE</sequence>
<protein>
    <recommendedName>
        <fullName evidence="1">Large ribosomal subunit protein uL15</fullName>
    </recommendedName>
    <alternativeName>
        <fullName evidence="3">50S ribosomal protein L15</fullName>
    </alternativeName>
</protein>
<feature type="chain" id="PRO_1000142786" description="Large ribosomal subunit protein uL15">
    <location>
        <begin position="1"/>
        <end position="144"/>
    </location>
</feature>
<feature type="region of interest" description="Disordered" evidence="2">
    <location>
        <begin position="1"/>
        <end position="62"/>
    </location>
</feature>
<feature type="compositionally biased region" description="Gly residues" evidence="2">
    <location>
        <begin position="21"/>
        <end position="31"/>
    </location>
</feature>
<keyword id="KW-1185">Reference proteome</keyword>
<keyword id="KW-0687">Ribonucleoprotein</keyword>
<keyword id="KW-0689">Ribosomal protein</keyword>
<keyword id="KW-0694">RNA-binding</keyword>
<keyword id="KW-0699">rRNA-binding</keyword>
<accession>B2JI46</accession>
<dbReference type="EMBL" id="CP001043">
    <property type="protein sequence ID" value="ACC71992.1"/>
    <property type="molecule type" value="Genomic_DNA"/>
</dbReference>
<dbReference type="RefSeq" id="WP_012402183.1">
    <property type="nucleotide sequence ID" value="NC_010622.1"/>
</dbReference>
<dbReference type="SMR" id="B2JI46"/>
<dbReference type="STRING" id="391038.Bphy_2820"/>
<dbReference type="KEGG" id="bph:Bphy_2820"/>
<dbReference type="eggNOG" id="COG0200">
    <property type="taxonomic scope" value="Bacteria"/>
</dbReference>
<dbReference type="HOGENOM" id="CLU_055188_4_2_4"/>
<dbReference type="OrthoDB" id="9810293at2"/>
<dbReference type="Proteomes" id="UP000001192">
    <property type="component" value="Chromosome 1"/>
</dbReference>
<dbReference type="GO" id="GO:0022625">
    <property type="term" value="C:cytosolic large ribosomal subunit"/>
    <property type="evidence" value="ECO:0007669"/>
    <property type="project" value="TreeGrafter"/>
</dbReference>
<dbReference type="GO" id="GO:0019843">
    <property type="term" value="F:rRNA binding"/>
    <property type="evidence" value="ECO:0007669"/>
    <property type="project" value="UniProtKB-UniRule"/>
</dbReference>
<dbReference type="GO" id="GO:0003735">
    <property type="term" value="F:structural constituent of ribosome"/>
    <property type="evidence" value="ECO:0007669"/>
    <property type="project" value="InterPro"/>
</dbReference>
<dbReference type="GO" id="GO:0006412">
    <property type="term" value="P:translation"/>
    <property type="evidence" value="ECO:0007669"/>
    <property type="project" value="UniProtKB-UniRule"/>
</dbReference>
<dbReference type="Gene3D" id="3.100.10.10">
    <property type="match status" value="1"/>
</dbReference>
<dbReference type="HAMAP" id="MF_01341">
    <property type="entry name" value="Ribosomal_uL15"/>
    <property type="match status" value="1"/>
</dbReference>
<dbReference type="InterPro" id="IPR030878">
    <property type="entry name" value="Ribosomal_uL15"/>
</dbReference>
<dbReference type="InterPro" id="IPR021131">
    <property type="entry name" value="Ribosomal_uL15/eL18"/>
</dbReference>
<dbReference type="InterPro" id="IPR036227">
    <property type="entry name" value="Ribosomal_uL15/eL18_sf"/>
</dbReference>
<dbReference type="InterPro" id="IPR005749">
    <property type="entry name" value="Ribosomal_uL15_bac-type"/>
</dbReference>
<dbReference type="InterPro" id="IPR001196">
    <property type="entry name" value="Ribosomal_uL15_CS"/>
</dbReference>
<dbReference type="NCBIfam" id="TIGR01071">
    <property type="entry name" value="rplO_bact"/>
    <property type="match status" value="1"/>
</dbReference>
<dbReference type="PANTHER" id="PTHR12934">
    <property type="entry name" value="50S RIBOSOMAL PROTEIN L15"/>
    <property type="match status" value="1"/>
</dbReference>
<dbReference type="PANTHER" id="PTHR12934:SF11">
    <property type="entry name" value="LARGE RIBOSOMAL SUBUNIT PROTEIN UL15M"/>
    <property type="match status" value="1"/>
</dbReference>
<dbReference type="Pfam" id="PF00828">
    <property type="entry name" value="Ribosomal_L27A"/>
    <property type="match status" value="1"/>
</dbReference>
<dbReference type="SUPFAM" id="SSF52080">
    <property type="entry name" value="Ribosomal proteins L15p and L18e"/>
    <property type="match status" value="1"/>
</dbReference>
<dbReference type="PROSITE" id="PS00475">
    <property type="entry name" value="RIBOSOMAL_L15"/>
    <property type="match status" value="1"/>
</dbReference>
<evidence type="ECO:0000255" key="1">
    <source>
        <dbReference type="HAMAP-Rule" id="MF_01341"/>
    </source>
</evidence>
<evidence type="ECO:0000256" key="2">
    <source>
        <dbReference type="SAM" id="MobiDB-lite"/>
    </source>
</evidence>
<evidence type="ECO:0000305" key="3"/>
<reference key="1">
    <citation type="journal article" date="2014" name="Stand. Genomic Sci.">
        <title>Complete genome sequence of Burkholderia phymatum STM815(T), a broad host range and efficient nitrogen-fixing symbiont of Mimosa species.</title>
        <authorList>
            <person name="Moulin L."/>
            <person name="Klonowska A."/>
            <person name="Caroline B."/>
            <person name="Booth K."/>
            <person name="Vriezen J.A."/>
            <person name="Melkonian R."/>
            <person name="James E.K."/>
            <person name="Young J.P."/>
            <person name="Bena G."/>
            <person name="Hauser L."/>
            <person name="Land M."/>
            <person name="Kyrpides N."/>
            <person name="Bruce D."/>
            <person name="Chain P."/>
            <person name="Copeland A."/>
            <person name="Pitluck S."/>
            <person name="Woyke T."/>
            <person name="Lizotte-Waniewski M."/>
            <person name="Bristow J."/>
            <person name="Riley M."/>
        </authorList>
    </citation>
    <scope>NUCLEOTIDE SEQUENCE [LARGE SCALE GENOMIC DNA]</scope>
    <source>
        <strain>DSM 17167 / CIP 108236 / LMG 21445 / STM815</strain>
    </source>
</reference>